<sequence>MATPSAAFEALMNGVTSWDVPEDAVPCELLLIGEASFPVMVNDMGQVLIAASSYGRGRLVVVSHEDYLVEAQLTPFLLNAVGWLCSSPGAPIGVHPSLAPLAKILEGSGVDAKVEPEVKDSLGVYCIDAYNETMTEKLVKFMKCGGGLLIGGQAWDWANQGEDERVLFTFPGNLVTSVAGIYFTDNKGDTSFFKVSKKMPKIPVLVSCEDDLSDDREELLHGISELDISNSDCFPSQLLVHGALAFPLGLDSYHGCVIAAARYGRGRVVVTGHKVLFTVGKLGPFLLNAVRWLDGGRRGKVVVQTELRTLSGLLAVGGIDTSIEPNLTSDASVYCFEPVSEVGVKELQEFVAEGGGLFVGAQAWWWAFKNPGVSPLARFPGNLLLNPFGISITSQSLNPGPFRTPKAGIRTYHFRSTLAEFQVIMGRKRGNVEKGWLAKLGPDGAAFLQIPAEEIPAYMSVHRLLRKLLSRYRLPVATRENPVINDCCRGAMLSLATGLAHSGSDLSLLVPEIEDMYSSPYLRPSESPITVEVNCTNPGTRYCWMSTGLYIPGRQIIEVSLPEAAASADLKIQIGCHTDDLTRASKLFRGPLVINRCCLDKPTKSITCLWGGLLYIIVPQNSKLGSVPVTVKGAVHAPYYKLGETTLEEWKRRIQENPGPWGELATDNIILTVPTANLRTLENPEPLLRLWDEVMQAVARLGAEPFPLRLPQRIVADVQISVGWMHAGYPIMCHLESVQELINEKLIRTKGLWGPVHELGRNQQRQEWEFPPHTTEATCNLWCVYVHETVLGIPRSRANIALWPPVREKRVRIYLSKGPNVKNWNAWTALETYLQLQEAFGWEPFIRLFTEYRNQTNLPTENVDKMNLWVKMFSHQVQKNLAPFFEAWAWPIQKEVATSLAYLPEWKENIMKLYLLTQMPH</sequence>
<accession>Q9Y4C2</accession>
<accession>A8K6E0</accession>
<accession>Q75KM8</accession>
<accession>Q75KM9</accession>
<accession>Q7L665</accession>
<accession>Q9BW63</accession>
<feature type="chain" id="PRO_0000320182" description="TRPM8 channel-associated factor 1">
    <location>
        <begin position="1"/>
        <end position="921"/>
    </location>
</feature>
<feature type="domain" description="Peptidase M60" evidence="1">
    <location>
        <begin position="542"/>
        <end position="841"/>
    </location>
</feature>
<feature type="splice variant" id="VSP_031631" description="In isoform 2." evidence="3">
    <location>
        <begin position="920"/>
        <end position="921"/>
    </location>
</feature>
<feature type="sequence conflict" description="In Ref. 1; BAA34458, 3; BAF84294 and 5; AAH00609." evidence="5" ref="1 3 5">
    <original>V</original>
    <variation>I</variation>
    <location>
        <position position="301"/>
    </location>
</feature>
<dbReference type="EMBL" id="AB018281">
    <property type="protein sequence ID" value="BAA34458.2"/>
    <property type="status" value="ALT_INIT"/>
    <property type="molecule type" value="mRNA"/>
</dbReference>
<dbReference type="EMBL" id="AK291605">
    <property type="protein sequence ID" value="BAF84294.1"/>
    <property type="molecule type" value="mRNA"/>
</dbReference>
<dbReference type="EMBL" id="AC099548">
    <property type="protein sequence ID" value="AAQ96852.1"/>
    <property type="molecule type" value="Genomic_DNA"/>
</dbReference>
<dbReference type="EMBL" id="AC099548">
    <property type="protein sequence ID" value="AAQ96853.1"/>
    <property type="molecule type" value="Genomic_DNA"/>
</dbReference>
<dbReference type="EMBL" id="BC000609">
    <property type="protein sequence ID" value="AAH00609.1"/>
    <property type="molecule type" value="mRNA"/>
</dbReference>
<dbReference type="CCDS" id="CCDS56514.1">
    <molecule id="Q9Y4C2-2"/>
</dbReference>
<dbReference type="CCDS" id="CCDS5886.1">
    <molecule id="Q9Y4C2-1"/>
</dbReference>
<dbReference type="RefSeq" id="NP_001193867.2">
    <molecule id="Q9Y4C2-2"/>
    <property type="nucleotide sequence ID" value="NM_001206938.2"/>
</dbReference>
<dbReference type="RefSeq" id="NP_001193870.1">
    <property type="nucleotide sequence ID" value="NM_001206941.1"/>
</dbReference>
<dbReference type="RefSeq" id="NP_055534.2">
    <molecule id="Q9Y4C2-1"/>
    <property type="nucleotide sequence ID" value="NM_014719.3"/>
</dbReference>
<dbReference type="RefSeq" id="XP_005250131.1">
    <molecule id="Q9Y4C2-1"/>
    <property type="nucleotide sequence ID" value="XM_005250074.5"/>
</dbReference>
<dbReference type="RefSeq" id="XP_005250132.1">
    <molecule id="Q9Y4C2-1"/>
    <property type="nucleotide sequence ID" value="XM_005250075.4"/>
</dbReference>
<dbReference type="RefSeq" id="XP_005250133.1">
    <molecule id="Q9Y4C2-1"/>
    <property type="nucleotide sequence ID" value="XM_005250076.5"/>
</dbReference>
<dbReference type="RefSeq" id="XP_005250134.1">
    <molecule id="Q9Y4C2-1"/>
    <property type="nucleotide sequence ID" value="XM_005250077.3"/>
</dbReference>
<dbReference type="RefSeq" id="XP_006716254.1">
    <molecule id="Q9Y4C2-1"/>
    <property type="nucleotide sequence ID" value="XM_006716191.3"/>
</dbReference>
<dbReference type="RefSeq" id="XP_006716255.1">
    <property type="nucleotide sequence ID" value="XM_006716192.3"/>
</dbReference>
<dbReference type="RefSeq" id="XP_016868322.1">
    <property type="nucleotide sequence ID" value="XM_017012833.1"/>
</dbReference>
<dbReference type="RefSeq" id="XP_016868323.1">
    <property type="nucleotide sequence ID" value="XM_017012834.1"/>
</dbReference>
<dbReference type="RefSeq" id="XP_016868324.1">
    <property type="nucleotide sequence ID" value="XM_017012835.1"/>
</dbReference>
<dbReference type="RefSeq" id="XP_016868325.1">
    <property type="nucleotide sequence ID" value="XM_017012836.1"/>
</dbReference>
<dbReference type="BioGRID" id="115095">
    <property type="interactions" value="157"/>
</dbReference>
<dbReference type="CORUM" id="Q9Y4C2"/>
<dbReference type="FunCoup" id="Q9Y4C2">
    <property type="interactions" value="758"/>
</dbReference>
<dbReference type="IntAct" id="Q9Y4C2">
    <property type="interactions" value="80"/>
</dbReference>
<dbReference type="MINT" id="Q9Y4C2"/>
<dbReference type="STRING" id="9606.ENSP00000419235"/>
<dbReference type="MEROPS" id="M98.A03"/>
<dbReference type="GlyGen" id="Q9Y4C2">
    <property type="glycosylation" value="2 sites, 1 O-linked glycan (1 site)"/>
</dbReference>
<dbReference type="iPTMnet" id="Q9Y4C2"/>
<dbReference type="PhosphoSitePlus" id="Q9Y4C2"/>
<dbReference type="SwissPalm" id="Q9Y4C2"/>
<dbReference type="BioMuta" id="TCAF1"/>
<dbReference type="DMDM" id="182628294"/>
<dbReference type="jPOST" id="Q9Y4C2"/>
<dbReference type="MassIVE" id="Q9Y4C2"/>
<dbReference type="PaxDb" id="9606-ENSP00000419235"/>
<dbReference type="PeptideAtlas" id="Q9Y4C2"/>
<dbReference type="ProteomicsDB" id="86158">
    <molecule id="Q9Y4C2-1"/>
</dbReference>
<dbReference type="ProteomicsDB" id="86159">
    <molecule id="Q9Y4C2-2"/>
</dbReference>
<dbReference type="Pumba" id="Q9Y4C2"/>
<dbReference type="Antibodypedia" id="66174">
    <property type="antibodies" value="33 antibodies from 11 providers"/>
</dbReference>
<dbReference type="DNASU" id="9747"/>
<dbReference type="Ensembl" id="ENST00000355951.2">
    <molecule id="Q9Y4C2-2"/>
    <property type="protein sequence ID" value="ENSP00000348220.2"/>
    <property type="gene ID" value="ENSG00000198420.10"/>
</dbReference>
<dbReference type="Ensembl" id="ENST00000479870.6">
    <molecule id="Q9Y4C2-1"/>
    <property type="protein sequence ID" value="ENSP00000419235.1"/>
    <property type="gene ID" value="ENSG00000198420.10"/>
</dbReference>
<dbReference type="GeneID" id="9747"/>
<dbReference type="KEGG" id="hsa:9747"/>
<dbReference type="MANE-Select" id="ENST00000479870.6">
    <property type="protein sequence ID" value="ENSP00000419235.1"/>
    <property type="RefSeq nucleotide sequence ID" value="NM_014719.3"/>
    <property type="RefSeq protein sequence ID" value="NP_055534.2"/>
</dbReference>
<dbReference type="UCSC" id="uc003wdo.3">
    <molecule id="Q9Y4C2-1"/>
    <property type="organism name" value="human"/>
</dbReference>
<dbReference type="AGR" id="HGNC:22201"/>
<dbReference type="CTD" id="9747"/>
<dbReference type="DisGeNET" id="9747"/>
<dbReference type="GeneCards" id="TCAF1"/>
<dbReference type="HGNC" id="HGNC:22201">
    <property type="gene designation" value="TCAF1"/>
</dbReference>
<dbReference type="HPA" id="ENSG00000198420">
    <property type="expression patterns" value="Low tissue specificity"/>
</dbReference>
<dbReference type="MIM" id="616251">
    <property type="type" value="gene"/>
</dbReference>
<dbReference type="neXtProt" id="NX_Q9Y4C2"/>
<dbReference type="OpenTargets" id="ENSG00000198420"/>
<dbReference type="PharmGKB" id="PA162385749"/>
<dbReference type="VEuPathDB" id="HostDB:ENSG00000198420"/>
<dbReference type="eggNOG" id="ENOG502S2AP">
    <property type="taxonomic scope" value="Eukaryota"/>
</dbReference>
<dbReference type="GeneTree" id="ENSGT00390000017365"/>
<dbReference type="HOGENOM" id="CLU_011215_0_0_1"/>
<dbReference type="InParanoid" id="Q9Y4C2"/>
<dbReference type="OMA" id="YMAIPAE"/>
<dbReference type="OrthoDB" id="10260387at2759"/>
<dbReference type="PAN-GO" id="Q9Y4C2">
    <property type="GO annotations" value="4 GO annotations based on evolutionary models"/>
</dbReference>
<dbReference type="PhylomeDB" id="Q9Y4C2"/>
<dbReference type="TreeFam" id="TF331520"/>
<dbReference type="PathwayCommons" id="Q9Y4C2"/>
<dbReference type="SignaLink" id="Q9Y4C2"/>
<dbReference type="BioGRID-ORCS" id="9747">
    <property type="hits" value="22 hits in 1147 CRISPR screens"/>
</dbReference>
<dbReference type="ChiTaRS" id="TCAF1">
    <property type="organism name" value="human"/>
</dbReference>
<dbReference type="GenomeRNAi" id="9747"/>
<dbReference type="Pharos" id="Q9Y4C2">
    <property type="development level" value="Tbio"/>
</dbReference>
<dbReference type="PRO" id="PR:Q9Y4C2"/>
<dbReference type="Proteomes" id="UP000005640">
    <property type="component" value="Chromosome 7"/>
</dbReference>
<dbReference type="RNAct" id="Q9Y4C2">
    <property type="molecule type" value="protein"/>
</dbReference>
<dbReference type="Bgee" id="ENSG00000198420">
    <property type="expression patterns" value="Expressed in adrenal tissue and 218 other cell types or tissues"/>
</dbReference>
<dbReference type="ExpressionAtlas" id="Q9Y4C2">
    <property type="expression patterns" value="baseline and differential"/>
</dbReference>
<dbReference type="GO" id="GO:0005886">
    <property type="term" value="C:plasma membrane"/>
    <property type="evidence" value="ECO:0000314"/>
    <property type="project" value="UniProtKB"/>
</dbReference>
<dbReference type="GO" id="GO:0044325">
    <property type="term" value="F:transmembrane transporter binding"/>
    <property type="evidence" value="ECO:0000314"/>
    <property type="project" value="MGI"/>
</dbReference>
<dbReference type="GO" id="GO:0030336">
    <property type="term" value="P:negative regulation of cell migration"/>
    <property type="evidence" value="ECO:0000314"/>
    <property type="project" value="UniProtKB"/>
</dbReference>
<dbReference type="GO" id="GO:1901529">
    <property type="term" value="P:positive regulation of anion channel activity"/>
    <property type="evidence" value="ECO:0000314"/>
    <property type="project" value="UniProtKB"/>
</dbReference>
<dbReference type="GO" id="GO:0090314">
    <property type="term" value="P:positive regulation of protein targeting to membrane"/>
    <property type="evidence" value="ECO:0000315"/>
    <property type="project" value="UniProtKB"/>
</dbReference>
<dbReference type="FunFam" id="1.10.390.30:FF:000001">
    <property type="entry name" value="TRPM8 channel-associated factor 1"/>
    <property type="match status" value="1"/>
</dbReference>
<dbReference type="FunFam" id="3.40.390.80:FF:000001">
    <property type="entry name" value="TRPM8 channel-associated factor 1"/>
    <property type="match status" value="1"/>
</dbReference>
<dbReference type="Gene3D" id="3.40.390.80">
    <property type="entry name" value="Peptidase M60, enhancin-like domain 2"/>
    <property type="match status" value="1"/>
</dbReference>
<dbReference type="Gene3D" id="1.10.390.30">
    <property type="entry name" value="Peptidase M60, enhancin-like domain 3"/>
    <property type="match status" value="1"/>
</dbReference>
<dbReference type="InterPro" id="IPR029062">
    <property type="entry name" value="Class_I_gatase-like"/>
</dbReference>
<dbReference type="InterPro" id="IPR035423">
    <property type="entry name" value="M60-like_N"/>
</dbReference>
<dbReference type="InterPro" id="IPR042279">
    <property type="entry name" value="Pep_M60_3"/>
</dbReference>
<dbReference type="InterPro" id="IPR031161">
    <property type="entry name" value="Peptidase_M60_dom"/>
</dbReference>
<dbReference type="InterPro" id="IPR051244">
    <property type="entry name" value="TCAF"/>
</dbReference>
<dbReference type="PANTHER" id="PTHR15730">
    <property type="entry name" value="EXPERIMENTAL AUTOIMMUNE PROSTATITIS ANTIGEN 2-RELATED"/>
    <property type="match status" value="1"/>
</dbReference>
<dbReference type="PANTHER" id="PTHR15730:SF1">
    <property type="entry name" value="TRPM8 CHANNEL-ASSOCIATED FACTOR 1"/>
    <property type="match status" value="1"/>
</dbReference>
<dbReference type="Pfam" id="PF17291">
    <property type="entry name" value="M60-like_N"/>
    <property type="match status" value="1"/>
</dbReference>
<dbReference type="Pfam" id="PF13402">
    <property type="entry name" value="Peptidase_M60"/>
    <property type="match status" value="1"/>
</dbReference>
<dbReference type="SMART" id="SM01276">
    <property type="entry name" value="M60-like"/>
    <property type="match status" value="1"/>
</dbReference>
<dbReference type="SUPFAM" id="SSF52317">
    <property type="entry name" value="Class I glutamine amidotransferase-like"/>
    <property type="match status" value="1"/>
</dbReference>
<dbReference type="PROSITE" id="PS51723">
    <property type="entry name" value="PEPTIDASE_M60"/>
    <property type="match status" value="1"/>
</dbReference>
<gene>
    <name evidence="4 6" type="primary">TCAF1</name>
    <name type="synonym">FAM115A</name>
    <name type="synonym">KIAA0738</name>
</gene>
<keyword id="KW-0025">Alternative splicing</keyword>
<keyword id="KW-1003">Cell membrane</keyword>
<keyword id="KW-0472">Membrane</keyword>
<keyword id="KW-1267">Proteomics identification</keyword>
<keyword id="KW-1185">Reference proteome</keyword>
<keyword id="KW-0813">Transport</keyword>
<comment type="function">
    <text evidence="2">Positively regulates the plasma membrane cation channel TRPM8 activity. Involved in the recruitment of TRPM8 to the cell surface. Promotes prostate cancer cell migration inhibition in a TRPM8-dependent manner.</text>
</comment>
<comment type="subunit">
    <text evidence="2">Interacts with TRPM8 (via N-terminus and C-terminus domains); the interaction inhibits TRPM8 channel activity. Interacts with TRPV6.</text>
</comment>
<comment type="interaction">
    <interactant intactId="EBI-750484">
        <id>Q9Y4C2</id>
    </interactant>
    <interactant intactId="EBI-747204">
        <id>Q9UKT9</id>
        <label>IKZF3</label>
    </interactant>
    <organismsDiffer>false</organismsDiffer>
    <experiments>5</experiments>
</comment>
<comment type="interaction">
    <interactant intactId="EBI-750484">
        <id>Q9Y4C2</id>
    </interactant>
    <interactant intactId="EBI-348469">
        <id>Q15427</id>
        <label>SF3B4</label>
    </interactant>
    <organismsDiffer>false</organismsDiffer>
    <experiments>5</experiments>
</comment>
<comment type="interaction">
    <interactant intactId="EBI-750484">
        <id>Q9Y4C2</id>
    </interactant>
    <interactant intactId="EBI-742487">
        <id>O43597</id>
        <label>SPRY2</label>
    </interactant>
    <organismsDiffer>false</organismsDiffer>
    <experiments>3</experiments>
</comment>
<comment type="interaction">
    <interactant intactId="EBI-750484">
        <id>Q9Y4C2</id>
    </interactant>
    <interactant intactId="EBI-769630">
        <id>P15923</id>
        <label>TCF3</label>
    </interactant>
    <organismsDiffer>false</organismsDiffer>
    <experiments>3</experiments>
</comment>
<comment type="interaction">
    <interactant intactId="EBI-750484">
        <id>Q9Y4C2</id>
    </interactant>
    <interactant intactId="EBI-1105213">
        <id>Q9UBB9</id>
        <label>TFIP11</label>
    </interactant>
    <organismsDiffer>false</organismsDiffer>
    <experiments>3</experiments>
</comment>
<comment type="interaction">
    <interactant intactId="EBI-750484">
        <id>Q9Y4C2</id>
    </interactant>
    <interactant intactId="EBI-742327">
        <id>Q15654</id>
        <label>TRIP6</label>
    </interactant>
    <organismsDiffer>false</organismsDiffer>
    <experiments>3</experiments>
</comment>
<comment type="interaction">
    <interactant intactId="EBI-750484">
        <id>Q9Y4C2</id>
    </interactant>
    <interactant intactId="EBI-707773">
        <id>P17028</id>
        <label>ZNF24</label>
    </interactant>
    <organismsDiffer>false</organismsDiffer>
    <experiments>3</experiments>
</comment>
<comment type="interaction">
    <interactant intactId="EBI-750484">
        <id>Q9Y4C2</id>
    </interactant>
    <interactant intactId="EBI-744493">
        <id>O14978</id>
        <label>ZNF263</label>
    </interactant>
    <organismsDiffer>false</organismsDiffer>
    <experiments>3</experiments>
</comment>
<comment type="interaction">
    <interactant intactId="EBI-750484">
        <id>Q9Y4C2</id>
    </interactant>
    <interactant intactId="EBI-1210420">
        <id>Q92610</id>
        <label>ZNF592</label>
    </interactant>
    <organismsDiffer>false</organismsDiffer>
    <experiments>3</experiments>
</comment>
<comment type="interaction">
    <interactant intactId="EBI-11974855">
        <id>Q9Y4C2-2</id>
    </interactant>
    <interactant intactId="EBI-514538">
        <id>Q13490</id>
        <label>BIRC2</label>
    </interactant>
    <organismsDiffer>false</organismsDiffer>
    <experiments>3</experiments>
</comment>
<comment type="interaction">
    <interactant intactId="EBI-11974855">
        <id>Q9Y4C2-2</id>
    </interactant>
    <interactant intactId="EBI-1383687">
        <id>Q9UQM7</id>
        <label>CAMK2A</label>
    </interactant>
    <organismsDiffer>false</organismsDiffer>
    <experiments>3</experiments>
</comment>
<comment type="interaction">
    <interactant intactId="EBI-11974855">
        <id>Q9Y4C2-2</id>
    </interactant>
    <interactant intactId="EBI-739624">
        <id>Q8NHQ1</id>
        <label>CEP70</label>
    </interactant>
    <organismsDiffer>false</organismsDiffer>
    <experiments>3</experiments>
</comment>
<comment type="interaction">
    <interactant intactId="EBI-11974855">
        <id>Q9Y4C2-2</id>
    </interactant>
    <interactant intactId="EBI-741671">
        <id>Q969H4</id>
        <label>CNKSR1</label>
    </interactant>
    <organismsDiffer>false</organismsDiffer>
    <experiments>3</experiments>
</comment>
<comment type="interaction">
    <interactant intactId="EBI-11974855">
        <id>Q9Y4C2-2</id>
    </interactant>
    <interactant intactId="EBI-3867333">
        <id>A8MQ03</id>
        <label>CYSRT1</label>
    </interactant>
    <organismsDiffer>false</organismsDiffer>
    <experiments>3</experiments>
</comment>
<comment type="interaction">
    <interactant intactId="EBI-11974855">
        <id>Q9Y4C2-2</id>
    </interactant>
    <interactant intactId="EBI-11988027">
        <id>Q9NRI5-2</id>
        <label>DISC1</label>
    </interactant>
    <organismsDiffer>false</organismsDiffer>
    <experiments>3</experiments>
</comment>
<comment type="interaction">
    <interactant intactId="EBI-11974855">
        <id>Q9Y4C2-2</id>
    </interactant>
    <interactant intactId="EBI-747204">
        <id>Q9UKT9</id>
        <label>IKZF3</label>
    </interactant>
    <organismsDiffer>false</organismsDiffer>
    <experiments>3</experiments>
</comment>
<comment type="interaction">
    <interactant intactId="EBI-11974855">
        <id>Q9Y4C2-2</id>
    </interactant>
    <interactant intactId="EBI-1640423">
        <id>Q9H2S9</id>
        <label>IKZF4</label>
    </interactant>
    <organismsDiffer>false</organismsDiffer>
    <experiments>3</experiments>
</comment>
<comment type="interaction">
    <interactant intactId="EBI-11974855">
        <id>Q9Y4C2-2</id>
    </interactant>
    <interactant intactId="EBI-11749135">
        <id>Q8IUG1</id>
        <label>KRTAP1-3</label>
    </interactant>
    <organismsDiffer>false</organismsDiffer>
    <experiments>3</experiments>
</comment>
<comment type="interaction">
    <interactant intactId="EBI-11974855">
        <id>Q9Y4C2-2</id>
    </interactant>
    <interactant intactId="EBI-10171774">
        <id>P60410</id>
        <label>KRTAP10-8</label>
    </interactant>
    <organismsDiffer>false</organismsDiffer>
    <experiments>3</experiments>
</comment>
<comment type="interaction">
    <interactant intactId="EBI-11974855">
        <id>Q9Y4C2-2</id>
    </interactant>
    <interactant intactId="EBI-11953846">
        <id>Q52LG2</id>
        <label>KRTAP13-2</label>
    </interactant>
    <organismsDiffer>false</organismsDiffer>
    <experiments>3</experiments>
</comment>
<comment type="interaction">
    <interactant intactId="EBI-11974855">
        <id>Q9Y4C2-2</id>
    </interactant>
    <interactant intactId="EBI-22311199">
        <id>Q3LI67</id>
        <label>KRTAP6-3</label>
    </interactant>
    <organismsDiffer>false</organismsDiffer>
    <experiments>3</experiments>
</comment>
<comment type="interaction">
    <interactant intactId="EBI-11974855">
        <id>Q9Y4C2-2</id>
    </interactant>
    <interactant intactId="EBI-742610">
        <id>Q9Y6D9</id>
        <label>MAD1L1</label>
    </interactant>
    <organismsDiffer>false</organismsDiffer>
    <experiments>3</experiments>
</comment>
<comment type="interaction">
    <interactant intactId="EBI-11974855">
        <id>Q9Y4C2-2</id>
    </interactant>
    <interactant intactId="EBI-10172526">
        <id>Q9UJV3-2</id>
        <label>MID2</label>
    </interactant>
    <organismsDiffer>false</organismsDiffer>
    <experiments>3</experiments>
</comment>
<comment type="interaction">
    <interactant intactId="EBI-11974855">
        <id>Q9Y4C2-2</id>
    </interactant>
    <interactant intactId="EBI-11061759">
        <id>P23511-2</id>
        <label>NFYA</label>
    </interactant>
    <organismsDiffer>false</organismsDiffer>
    <experiments>3</experiments>
</comment>
<comment type="interaction">
    <interactant intactId="EBI-11974855">
        <id>Q9Y4C2-2</id>
    </interactant>
    <interactant intactId="EBI-22310682">
        <id>P0DPK4</id>
        <label>NOTCH2NLC</label>
    </interactant>
    <organismsDiffer>false</organismsDiffer>
    <experiments>3</experiments>
</comment>
<comment type="interaction">
    <interactant intactId="EBI-11974855">
        <id>Q9Y4C2-2</id>
    </interactant>
    <interactant intactId="EBI-3957793">
        <id>Q9GZV8</id>
        <label>PRDM14</label>
    </interactant>
    <organismsDiffer>false</organismsDiffer>
    <experiments>3</experiments>
</comment>
<comment type="interaction">
    <interactant intactId="EBI-11974855">
        <id>Q9Y4C2-2</id>
    </interactant>
    <interactant intactId="EBI-11320284">
        <id>Q9NQX0</id>
        <label>PRDM6</label>
    </interactant>
    <organismsDiffer>false</organismsDiffer>
    <experiments>3</experiments>
</comment>
<comment type="interaction">
    <interactant intactId="EBI-11974855">
        <id>Q9Y4C2-2</id>
    </interactant>
    <interactant intactId="EBI-1210429">
        <id>Q9NYW8</id>
        <label>RBAK</label>
    </interactant>
    <organismsDiffer>false</organismsDiffer>
    <experiments>3</experiments>
</comment>
<comment type="interaction">
    <interactant intactId="EBI-11974855">
        <id>Q9Y4C2-2</id>
    </interactant>
    <interactant intactId="EBI-11959369">
        <id>Q8IZE3-2</id>
        <label>SCYL3</label>
    </interactant>
    <organismsDiffer>false</organismsDiffer>
    <experiments>3</experiments>
</comment>
<comment type="interaction">
    <interactant intactId="EBI-11974855">
        <id>Q9Y4C2-2</id>
    </interactant>
    <interactant intactId="EBI-348469">
        <id>Q15427</id>
        <label>SF3B4</label>
    </interactant>
    <organismsDiffer>false</organismsDiffer>
    <experiments>3</experiments>
</comment>
<comment type="interaction">
    <interactant intactId="EBI-11974855">
        <id>Q9Y4C2-2</id>
    </interactant>
    <interactant intactId="EBI-529518">
        <id>Q86VP1</id>
        <label>TAX1BP1</label>
    </interactant>
    <organismsDiffer>false</organismsDiffer>
    <experiments>3</experiments>
</comment>
<comment type="interaction">
    <interactant intactId="EBI-11974855">
        <id>Q9Y4C2-2</id>
    </interactant>
    <interactant intactId="EBI-12000326">
        <id>P15923-3</id>
        <label>TCF3</label>
    </interactant>
    <organismsDiffer>false</organismsDiffer>
    <experiments>3</experiments>
</comment>
<comment type="interaction">
    <interactant intactId="EBI-11974855">
        <id>Q9Y4C2-2</id>
    </interactant>
    <interactant intactId="EBI-1105213">
        <id>Q9UBB9</id>
        <label>TFIP11</label>
    </interactant>
    <organismsDiffer>false</organismsDiffer>
    <experiments>3</experiments>
</comment>
<comment type="interaction">
    <interactant intactId="EBI-11974855">
        <id>Q9Y4C2-2</id>
    </interactant>
    <interactant intactId="EBI-355744">
        <id>Q12933</id>
        <label>TRAF2</label>
    </interactant>
    <organismsDiffer>false</organismsDiffer>
    <experiments>3</experiments>
</comment>
<comment type="interaction">
    <interactant intactId="EBI-11974855">
        <id>Q9Y4C2-2</id>
    </interactant>
    <interactant intactId="EBI-5235829">
        <id>Q8IWZ5</id>
        <label>TRIM42</label>
    </interactant>
    <organismsDiffer>false</organismsDiffer>
    <experiments>3</experiments>
</comment>
<comment type="interaction">
    <interactant intactId="EBI-11974855">
        <id>Q9Y4C2-2</id>
    </interactant>
    <interactant intactId="EBI-2130429">
        <id>Q9BYV2</id>
        <label>TRIM54</label>
    </interactant>
    <organismsDiffer>false</organismsDiffer>
    <experiments>3</experiments>
</comment>
<comment type="interaction">
    <interactant intactId="EBI-11974855">
        <id>Q9Y4C2-2</id>
    </interactant>
    <interactant intactId="EBI-2849334">
        <id>P52747</id>
        <label>ZNF143</label>
    </interactant>
    <organismsDiffer>false</organismsDiffer>
    <experiments>3</experiments>
</comment>
<comment type="subcellular location">
    <subcellularLocation>
        <location evidence="2">Cell membrane</location>
    </subcellularLocation>
    <text evidence="2">Colocalizes with TRPM8 on the plasma membrane.</text>
</comment>
<comment type="alternative products">
    <event type="alternative splicing"/>
    <isoform>
        <id>Q9Y4C2-1</id>
        <name>1</name>
        <sequence type="displayed"/>
    </isoform>
    <isoform>
        <id>Q9Y4C2-2</id>
        <name>2</name>
        <sequence type="described" ref="VSP_031631"/>
    </isoform>
</comment>
<comment type="tissue specificity">
    <text evidence="2">Isoform 2 is expressed in the prostate and strongly expressed in cancerous prostate samples.</text>
</comment>
<comment type="domain">
    <text evidence="2">The C-terminal region is necessary for the channel activity stimulation.</text>
</comment>
<comment type="similarity">
    <text evidence="5">Belongs to the TCAF family.</text>
</comment>
<comment type="sequence caution" evidence="5">
    <conflict type="erroneous initiation">
        <sequence resource="EMBL-CDS" id="BAA34458"/>
    </conflict>
</comment>
<evidence type="ECO:0000255" key="1">
    <source>
        <dbReference type="PROSITE-ProRule" id="PRU01060"/>
    </source>
</evidence>
<evidence type="ECO:0000269" key="2">
    <source>
    </source>
</evidence>
<evidence type="ECO:0000303" key="3">
    <source>
    </source>
</evidence>
<evidence type="ECO:0000303" key="4">
    <source>
    </source>
</evidence>
<evidence type="ECO:0000305" key="5"/>
<evidence type="ECO:0000312" key="6">
    <source>
        <dbReference type="HGNC" id="HGNC:22201"/>
    </source>
</evidence>
<protein>
    <recommendedName>
        <fullName evidence="4">TRPM8 channel-associated factor 1</fullName>
    </recommendedName>
    <alternativeName>
        <fullName evidence="4">TRP channel-associated factor 1</fullName>
    </alternativeName>
</protein>
<proteinExistence type="evidence at protein level"/>
<name>TCAF1_HUMAN</name>
<organism>
    <name type="scientific">Homo sapiens</name>
    <name type="common">Human</name>
    <dbReference type="NCBI Taxonomy" id="9606"/>
    <lineage>
        <taxon>Eukaryota</taxon>
        <taxon>Metazoa</taxon>
        <taxon>Chordata</taxon>
        <taxon>Craniata</taxon>
        <taxon>Vertebrata</taxon>
        <taxon>Euteleostomi</taxon>
        <taxon>Mammalia</taxon>
        <taxon>Eutheria</taxon>
        <taxon>Euarchontoglires</taxon>
        <taxon>Primates</taxon>
        <taxon>Haplorrhini</taxon>
        <taxon>Catarrhini</taxon>
        <taxon>Hominidae</taxon>
        <taxon>Homo</taxon>
    </lineage>
</organism>
<reference key="1">
    <citation type="journal article" date="1998" name="DNA Res.">
        <title>Prediction of the coding sequences of unidentified human genes. XI. The complete sequences of 100 new cDNA clones from brain which code for large proteins in vitro.</title>
        <authorList>
            <person name="Nagase T."/>
            <person name="Ishikawa K."/>
            <person name="Suyama M."/>
            <person name="Kikuno R."/>
            <person name="Miyajima N."/>
            <person name="Tanaka A."/>
            <person name="Kotani H."/>
            <person name="Nomura N."/>
            <person name="Ohara O."/>
        </authorList>
    </citation>
    <scope>NUCLEOTIDE SEQUENCE [LARGE SCALE MRNA] (ISOFORM 1)</scope>
    <source>
        <tissue>Brain</tissue>
    </source>
</reference>
<reference key="2">
    <citation type="submission" date="2004-01" db="EMBL/GenBank/DDBJ databases">
        <authorList>
            <person name="Ohara O."/>
            <person name="Suyama M."/>
            <person name="Nagase T."/>
            <person name="Ishikawa K."/>
            <person name="Kikuno R."/>
        </authorList>
    </citation>
    <scope>SEQUENCE REVISION</scope>
</reference>
<reference key="3">
    <citation type="journal article" date="2004" name="Nat. Genet.">
        <title>Complete sequencing and characterization of 21,243 full-length human cDNAs.</title>
        <authorList>
            <person name="Ota T."/>
            <person name="Suzuki Y."/>
            <person name="Nishikawa T."/>
            <person name="Otsuki T."/>
            <person name="Sugiyama T."/>
            <person name="Irie R."/>
            <person name="Wakamatsu A."/>
            <person name="Hayashi K."/>
            <person name="Sato H."/>
            <person name="Nagai K."/>
            <person name="Kimura K."/>
            <person name="Makita H."/>
            <person name="Sekine M."/>
            <person name="Obayashi M."/>
            <person name="Nishi T."/>
            <person name="Shibahara T."/>
            <person name="Tanaka T."/>
            <person name="Ishii S."/>
            <person name="Yamamoto J."/>
            <person name="Saito K."/>
            <person name="Kawai Y."/>
            <person name="Isono Y."/>
            <person name="Nakamura Y."/>
            <person name="Nagahari K."/>
            <person name="Murakami K."/>
            <person name="Yasuda T."/>
            <person name="Iwayanagi T."/>
            <person name="Wagatsuma M."/>
            <person name="Shiratori A."/>
            <person name="Sudo H."/>
            <person name="Hosoiri T."/>
            <person name="Kaku Y."/>
            <person name="Kodaira H."/>
            <person name="Kondo H."/>
            <person name="Sugawara M."/>
            <person name="Takahashi M."/>
            <person name="Kanda K."/>
            <person name="Yokoi T."/>
            <person name="Furuya T."/>
            <person name="Kikkawa E."/>
            <person name="Omura Y."/>
            <person name="Abe K."/>
            <person name="Kamihara K."/>
            <person name="Katsuta N."/>
            <person name="Sato K."/>
            <person name="Tanikawa M."/>
            <person name="Yamazaki M."/>
            <person name="Ninomiya K."/>
            <person name="Ishibashi T."/>
            <person name="Yamashita H."/>
            <person name="Murakawa K."/>
            <person name="Fujimori K."/>
            <person name="Tanai H."/>
            <person name="Kimata M."/>
            <person name="Watanabe M."/>
            <person name="Hiraoka S."/>
            <person name="Chiba Y."/>
            <person name="Ishida S."/>
            <person name="Ono Y."/>
            <person name="Takiguchi S."/>
            <person name="Watanabe S."/>
            <person name="Yosida M."/>
            <person name="Hotuta T."/>
            <person name="Kusano J."/>
            <person name="Kanehori K."/>
            <person name="Takahashi-Fujii A."/>
            <person name="Hara H."/>
            <person name="Tanase T.-O."/>
            <person name="Nomura Y."/>
            <person name="Togiya S."/>
            <person name="Komai F."/>
            <person name="Hara R."/>
            <person name="Takeuchi K."/>
            <person name="Arita M."/>
            <person name="Imose N."/>
            <person name="Musashino K."/>
            <person name="Yuuki H."/>
            <person name="Oshima A."/>
            <person name="Sasaki N."/>
            <person name="Aotsuka S."/>
            <person name="Yoshikawa Y."/>
            <person name="Matsunawa H."/>
            <person name="Ichihara T."/>
            <person name="Shiohata N."/>
            <person name="Sano S."/>
            <person name="Moriya S."/>
            <person name="Momiyama H."/>
            <person name="Satoh N."/>
            <person name="Takami S."/>
            <person name="Terashima Y."/>
            <person name="Suzuki O."/>
            <person name="Nakagawa S."/>
            <person name="Senoh A."/>
            <person name="Mizoguchi H."/>
            <person name="Goto Y."/>
            <person name="Shimizu F."/>
            <person name="Wakebe H."/>
            <person name="Hishigaki H."/>
            <person name="Watanabe T."/>
            <person name="Sugiyama A."/>
            <person name="Takemoto M."/>
            <person name="Kawakami B."/>
            <person name="Yamazaki M."/>
            <person name="Watanabe K."/>
            <person name="Kumagai A."/>
            <person name="Itakura S."/>
            <person name="Fukuzumi Y."/>
            <person name="Fujimori Y."/>
            <person name="Komiyama M."/>
            <person name="Tashiro H."/>
            <person name="Tanigami A."/>
            <person name="Fujiwara T."/>
            <person name="Ono T."/>
            <person name="Yamada K."/>
            <person name="Fujii Y."/>
            <person name="Ozaki K."/>
            <person name="Hirao M."/>
            <person name="Ohmori Y."/>
            <person name="Kawabata A."/>
            <person name="Hikiji T."/>
            <person name="Kobatake N."/>
            <person name="Inagaki H."/>
            <person name="Ikema Y."/>
            <person name="Okamoto S."/>
            <person name="Okitani R."/>
            <person name="Kawakami T."/>
            <person name="Noguchi S."/>
            <person name="Itoh T."/>
            <person name="Shigeta K."/>
            <person name="Senba T."/>
            <person name="Matsumura K."/>
            <person name="Nakajima Y."/>
            <person name="Mizuno T."/>
            <person name="Morinaga M."/>
            <person name="Sasaki M."/>
            <person name="Togashi T."/>
            <person name="Oyama M."/>
            <person name="Hata H."/>
            <person name="Watanabe M."/>
            <person name="Komatsu T."/>
            <person name="Mizushima-Sugano J."/>
            <person name="Satoh T."/>
            <person name="Shirai Y."/>
            <person name="Takahashi Y."/>
            <person name="Nakagawa K."/>
            <person name="Okumura K."/>
            <person name="Nagase T."/>
            <person name="Nomura N."/>
            <person name="Kikuchi H."/>
            <person name="Masuho Y."/>
            <person name="Yamashita R."/>
            <person name="Nakai K."/>
            <person name="Yada T."/>
            <person name="Nakamura Y."/>
            <person name="Ohara O."/>
            <person name="Isogai T."/>
            <person name="Sugano S."/>
        </authorList>
    </citation>
    <scope>NUCLEOTIDE SEQUENCE [LARGE SCALE MRNA] (ISOFORM 1)</scope>
    <source>
        <tissue>Placenta</tissue>
    </source>
</reference>
<reference key="4">
    <citation type="journal article" date="2003" name="Nature">
        <title>The DNA sequence of human chromosome 7.</title>
        <authorList>
            <person name="Hillier L.W."/>
            <person name="Fulton R.S."/>
            <person name="Fulton L.A."/>
            <person name="Graves T.A."/>
            <person name="Pepin K.H."/>
            <person name="Wagner-McPherson C."/>
            <person name="Layman D."/>
            <person name="Maas J."/>
            <person name="Jaeger S."/>
            <person name="Walker R."/>
            <person name="Wylie K."/>
            <person name="Sekhon M."/>
            <person name="Becker M.C."/>
            <person name="O'Laughlin M.D."/>
            <person name="Schaller M.E."/>
            <person name="Fewell G.A."/>
            <person name="Delehaunty K.D."/>
            <person name="Miner T.L."/>
            <person name="Nash W.E."/>
            <person name="Cordes M."/>
            <person name="Du H."/>
            <person name="Sun H."/>
            <person name="Edwards J."/>
            <person name="Bradshaw-Cordum H."/>
            <person name="Ali J."/>
            <person name="Andrews S."/>
            <person name="Isak A."/>
            <person name="Vanbrunt A."/>
            <person name="Nguyen C."/>
            <person name="Du F."/>
            <person name="Lamar B."/>
            <person name="Courtney L."/>
            <person name="Kalicki J."/>
            <person name="Ozersky P."/>
            <person name="Bielicki L."/>
            <person name="Scott K."/>
            <person name="Holmes A."/>
            <person name="Harkins R."/>
            <person name="Harris A."/>
            <person name="Strong C.M."/>
            <person name="Hou S."/>
            <person name="Tomlinson C."/>
            <person name="Dauphin-Kohlberg S."/>
            <person name="Kozlowicz-Reilly A."/>
            <person name="Leonard S."/>
            <person name="Rohlfing T."/>
            <person name="Rock S.M."/>
            <person name="Tin-Wollam A.-M."/>
            <person name="Abbott A."/>
            <person name="Minx P."/>
            <person name="Maupin R."/>
            <person name="Strowmatt C."/>
            <person name="Latreille P."/>
            <person name="Miller N."/>
            <person name="Johnson D."/>
            <person name="Murray J."/>
            <person name="Woessner J.P."/>
            <person name="Wendl M.C."/>
            <person name="Yang S.-P."/>
            <person name="Schultz B.R."/>
            <person name="Wallis J.W."/>
            <person name="Spieth J."/>
            <person name="Bieri T.A."/>
            <person name="Nelson J.O."/>
            <person name="Berkowicz N."/>
            <person name="Wohldmann P.E."/>
            <person name="Cook L.L."/>
            <person name="Hickenbotham M.T."/>
            <person name="Eldred J."/>
            <person name="Williams D."/>
            <person name="Bedell J.A."/>
            <person name="Mardis E.R."/>
            <person name="Clifton S.W."/>
            <person name="Chissoe S.L."/>
            <person name="Marra M.A."/>
            <person name="Raymond C."/>
            <person name="Haugen E."/>
            <person name="Gillett W."/>
            <person name="Zhou Y."/>
            <person name="James R."/>
            <person name="Phelps K."/>
            <person name="Iadanoto S."/>
            <person name="Bubb K."/>
            <person name="Simms E."/>
            <person name="Levy R."/>
            <person name="Clendenning J."/>
            <person name="Kaul R."/>
            <person name="Kent W.J."/>
            <person name="Furey T.S."/>
            <person name="Baertsch R.A."/>
            <person name="Brent M.R."/>
            <person name="Keibler E."/>
            <person name="Flicek P."/>
            <person name="Bork P."/>
            <person name="Suyama M."/>
            <person name="Bailey J.A."/>
            <person name="Portnoy M.E."/>
            <person name="Torrents D."/>
            <person name="Chinwalla A.T."/>
            <person name="Gish W.R."/>
            <person name="Eddy S.R."/>
            <person name="McPherson J.D."/>
            <person name="Olson M.V."/>
            <person name="Eichler E.E."/>
            <person name="Green E.D."/>
            <person name="Waterston R.H."/>
            <person name="Wilson R.K."/>
        </authorList>
    </citation>
    <scope>NUCLEOTIDE SEQUENCE [LARGE SCALE GENOMIC DNA]</scope>
</reference>
<reference key="5">
    <citation type="journal article" date="2004" name="Genome Res.">
        <title>The status, quality, and expansion of the NIH full-length cDNA project: the Mammalian Gene Collection (MGC).</title>
        <authorList>
            <consortium name="The MGC Project Team"/>
        </authorList>
    </citation>
    <scope>NUCLEOTIDE SEQUENCE [LARGE SCALE MRNA] (ISOFORM 2)</scope>
    <source>
        <tissue>Skin</tissue>
    </source>
</reference>
<reference key="6">
    <citation type="journal article" date="2011" name="BMC Syst. Biol.">
        <title>Initial characterization of the human central proteome.</title>
        <authorList>
            <person name="Burkard T.R."/>
            <person name="Planyavsky M."/>
            <person name="Kaupe I."/>
            <person name="Breitwieser F.P."/>
            <person name="Buerckstuemmer T."/>
            <person name="Bennett K.L."/>
            <person name="Superti-Furga G."/>
            <person name="Colinge J."/>
        </authorList>
    </citation>
    <scope>IDENTIFICATION BY MASS SPECTROMETRY [LARGE SCALE ANALYSIS]</scope>
</reference>
<reference key="7">
    <citation type="journal article" date="2014" name="J. Proteomics">
        <title>An enzyme assisted RP-RPLC approach for in-depth analysis of human liver phosphoproteome.</title>
        <authorList>
            <person name="Bian Y."/>
            <person name="Song C."/>
            <person name="Cheng K."/>
            <person name="Dong M."/>
            <person name="Wang F."/>
            <person name="Huang J."/>
            <person name="Sun D."/>
            <person name="Wang L."/>
            <person name="Ye M."/>
            <person name="Zou H."/>
        </authorList>
    </citation>
    <scope>IDENTIFICATION BY MASS SPECTROMETRY [LARGE SCALE ANALYSIS]</scope>
    <source>
        <tissue>Liver</tissue>
    </source>
</reference>
<reference key="8">
    <citation type="journal article" date="2015" name="J. Cell Biol.">
        <title>TRP channel-associated factors are a novel protein family that regulates TRPM8 trafficking and activity.</title>
        <authorList>
            <person name="Gkika D."/>
            <person name="Lemonnier L."/>
            <person name="Shapovalov G."/>
            <person name="Gordienko D."/>
            <person name="Poux C."/>
            <person name="Bernardini M."/>
            <person name="Bokhobza A."/>
            <person name="Bidaux G."/>
            <person name="Degerny C."/>
            <person name="Verreman K."/>
            <person name="Guarmit B."/>
            <person name="Benahmed M."/>
            <person name="de Launoit Y."/>
            <person name="Bindels R.J."/>
            <person name="Fiorio Pla A."/>
            <person name="Prevarskaya N."/>
        </authorList>
    </citation>
    <scope>FUNCTION</scope>
    <scope>INTERACTION WITH TRPM8 AND TRPV6</scope>
    <scope>SUBCELLULAR LOCATION</scope>
    <scope>DOMAIN</scope>
    <scope>TISSUE SPECIFICITY</scope>
</reference>